<organism>
    <name type="scientific">Dichelobacter nodosus (strain VCS1703A)</name>
    <dbReference type="NCBI Taxonomy" id="246195"/>
    <lineage>
        <taxon>Bacteria</taxon>
        <taxon>Pseudomonadati</taxon>
        <taxon>Pseudomonadota</taxon>
        <taxon>Gammaproteobacteria</taxon>
        <taxon>Cardiobacteriales</taxon>
        <taxon>Cardiobacteriaceae</taxon>
        <taxon>Dichelobacter</taxon>
    </lineage>
</organism>
<gene>
    <name evidence="1" type="primary">thiM</name>
    <name type="ordered locus">DNO_0932</name>
</gene>
<proteinExistence type="inferred from homology"/>
<protein>
    <recommendedName>
        <fullName evidence="1">Hydroxyethylthiazole kinase</fullName>
        <ecNumber evidence="1">2.7.1.50</ecNumber>
    </recommendedName>
    <alternativeName>
        <fullName evidence="1">4-methyl-5-beta-hydroxyethylthiazole kinase</fullName>
        <shortName evidence="1">TH kinase</shortName>
        <shortName evidence="1">Thz kinase</shortName>
    </alternativeName>
</protein>
<reference key="1">
    <citation type="journal article" date="2007" name="Nat. Biotechnol.">
        <title>Genome sequence and identification of candidate vaccine antigens from the animal pathogen Dichelobacter nodosus.</title>
        <authorList>
            <person name="Myers G.S.A."/>
            <person name="Parker D."/>
            <person name="Al-Hasani K."/>
            <person name="Kennan R.M."/>
            <person name="Seemann T."/>
            <person name="Ren Q."/>
            <person name="Badger J.H."/>
            <person name="Selengut J.D."/>
            <person name="Deboy R.T."/>
            <person name="Tettelin H."/>
            <person name="Boyce J.D."/>
            <person name="McCarl V.P."/>
            <person name="Han X."/>
            <person name="Nelson W.C."/>
            <person name="Madupu R."/>
            <person name="Mohamoud Y."/>
            <person name="Holley T."/>
            <person name="Fedorova N."/>
            <person name="Khouri H."/>
            <person name="Bottomley S.P."/>
            <person name="Whittington R.J."/>
            <person name="Adler B."/>
            <person name="Songer J.G."/>
            <person name="Rood J.I."/>
            <person name="Paulsen I.T."/>
        </authorList>
    </citation>
    <scope>NUCLEOTIDE SEQUENCE [LARGE SCALE GENOMIC DNA]</scope>
    <source>
        <strain>VCS1703A</strain>
    </source>
</reference>
<accession>A5EY60</accession>
<comment type="function">
    <text evidence="1">Catalyzes the phosphorylation of the hydroxyl group of 4-methyl-5-beta-hydroxyethylthiazole (THZ).</text>
</comment>
<comment type="catalytic activity">
    <reaction evidence="1">
        <text>5-(2-hydroxyethyl)-4-methylthiazole + ATP = 4-methyl-5-(2-phosphooxyethyl)-thiazole + ADP + H(+)</text>
        <dbReference type="Rhea" id="RHEA:24212"/>
        <dbReference type="ChEBI" id="CHEBI:15378"/>
        <dbReference type="ChEBI" id="CHEBI:17957"/>
        <dbReference type="ChEBI" id="CHEBI:30616"/>
        <dbReference type="ChEBI" id="CHEBI:58296"/>
        <dbReference type="ChEBI" id="CHEBI:456216"/>
        <dbReference type="EC" id="2.7.1.50"/>
    </reaction>
</comment>
<comment type="cofactor">
    <cofactor evidence="1">
        <name>Mg(2+)</name>
        <dbReference type="ChEBI" id="CHEBI:18420"/>
    </cofactor>
</comment>
<comment type="pathway">
    <text evidence="1">Cofactor biosynthesis; thiamine diphosphate biosynthesis; 4-methyl-5-(2-phosphoethyl)-thiazole from 5-(2-hydroxyethyl)-4-methylthiazole: step 1/1.</text>
</comment>
<comment type="similarity">
    <text evidence="1">Belongs to the Thz kinase family.</text>
</comment>
<sequence length="272" mass="29851">MTESLEMGKSIDFNVQTFDFKSAQFYLDRAYANAPFIHCLTNNTTKFFVANALLAIGAKPAMVESWQEVVEFSQRAANVVMNLDSLTDERLRSLSMSAQVAHDHGKWWVFDPAAVSDILSYRSGFARELLRYYPRVIRGNASEISYLNDTYGRRSFENVMSSSEAIEAAVKLAIHQRAVVVVTGEIDYVTDGETILAVRGGHPFLGRVCGTGCVLSAMIASTVLCGDVLYGAASACALMKRAGERAGLTTSGLGSFYVALLDNLTFPMRYQD</sequence>
<feature type="chain" id="PRO_0000383857" description="Hydroxyethylthiazole kinase">
    <location>
        <begin position="1"/>
        <end position="272"/>
    </location>
</feature>
<feature type="binding site" evidence="1">
    <location>
        <position position="62"/>
    </location>
    <ligand>
        <name>substrate</name>
    </ligand>
</feature>
<feature type="binding site" evidence="1">
    <location>
        <position position="138"/>
    </location>
    <ligand>
        <name>ATP</name>
        <dbReference type="ChEBI" id="CHEBI:30616"/>
    </ligand>
</feature>
<feature type="binding site" evidence="1">
    <location>
        <position position="183"/>
    </location>
    <ligand>
        <name>ATP</name>
        <dbReference type="ChEBI" id="CHEBI:30616"/>
    </ligand>
</feature>
<feature type="binding site" evidence="1">
    <location>
        <position position="210"/>
    </location>
    <ligand>
        <name>substrate</name>
    </ligand>
</feature>
<keyword id="KW-0067">ATP-binding</keyword>
<keyword id="KW-0418">Kinase</keyword>
<keyword id="KW-0460">Magnesium</keyword>
<keyword id="KW-0479">Metal-binding</keyword>
<keyword id="KW-0547">Nucleotide-binding</keyword>
<keyword id="KW-1185">Reference proteome</keyword>
<keyword id="KW-0784">Thiamine biosynthesis</keyword>
<keyword id="KW-0808">Transferase</keyword>
<evidence type="ECO:0000255" key="1">
    <source>
        <dbReference type="HAMAP-Rule" id="MF_00228"/>
    </source>
</evidence>
<name>THIM_DICNV</name>
<dbReference type="EC" id="2.7.1.50" evidence="1"/>
<dbReference type="EMBL" id="CP000513">
    <property type="protein sequence ID" value="ABQ13771.1"/>
    <property type="molecule type" value="Genomic_DNA"/>
</dbReference>
<dbReference type="RefSeq" id="WP_012031248.1">
    <property type="nucleotide sequence ID" value="NC_009446.1"/>
</dbReference>
<dbReference type="SMR" id="A5EY60"/>
<dbReference type="STRING" id="246195.DNO_0932"/>
<dbReference type="KEGG" id="dno:DNO_0932"/>
<dbReference type="eggNOG" id="COG2145">
    <property type="taxonomic scope" value="Bacteria"/>
</dbReference>
<dbReference type="HOGENOM" id="CLU_019943_0_1_6"/>
<dbReference type="UniPathway" id="UPA00060">
    <property type="reaction ID" value="UER00139"/>
</dbReference>
<dbReference type="Proteomes" id="UP000000248">
    <property type="component" value="Chromosome"/>
</dbReference>
<dbReference type="GO" id="GO:0005524">
    <property type="term" value="F:ATP binding"/>
    <property type="evidence" value="ECO:0007669"/>
    <property type="project" value="UniProtKB-UniRule"/>
</dbReference>
<dbReference type="GO" id="GO:0004417">
    <property type="term" value="F:hydroxyethylthiazole kinase activity"/>
    <property type="evidence" value="ECO:0007669"/>
    <property type="project" value="UniProtKB-UniRule"/>
</dbReference>
<dbReference type="GO" id="GO:0000287">
    <property type="term" value="F:magnesium ion binding"/>
    <property type="evidence" value="ECO:0007669"/>
    <property type="project" value="UniProtKB-UniRule"/>
</dbReference>
<dbReference type="GO" id="GO:0009228">
    <property type="term" value="P:thiamine biosynthetic process"/>
    <property type="evidence" value="ECO:0007669"/>
    <property type="project" value="UniProtKB-KW"/>
</dbReference>
<dbReference type="GO" id="GO:0009229">
    <property type="term" value="P:thiamine diphosphate biosynthetic process"/>
    <property type="evidence" value="ECO:0007669"/>
    <property type="project" value="UniProtKB-UniRule"/>
</dbReference>
<dbReference type="CDD" id="cd01170">
    <property type="entry name" value="THZ_kinase"/>
    <property type="match status" value="1"/>
</dbReference>
<dbReference type="Gene3D" id="3.40.1190.20">
    <property type="match status" value="1"/>
</dbReference>
<dbReference type="HAMAP" id="MF_00228">
    <property type="entry name" value="Thz_kinase"/>
    <property type="match status" value="1"/>
</dbReference>
<dbReference type="InterPro" id="IPR000417">
    <property type="entry name" value="Hyethyz_kinase"/>
</dbReference>
<dbReference type="InterPro" id="IPR029056">
    <property type="entry name" value="Ribokinase-like"/>
</dbReference>
<dbReference type="Pfam" id="PF02110">
    <property type="entry name" value="HK"/>
    <property type="match status" value="1"/>
</dbReference>
<dbReference type="PIRSF" id="PIRSF000513">
    <property type="entry name" value="Thz_kinase"/>
    <property type="match status" value="1"/>
</dbReference>
<dbReference type="PRINTS" id="PR01099">
    <property type="entry name" value="HYETHTZKNASE"/>
</dbReference>
<dbReference type="SUPFAM" id="SSF53613">
    <property type="entry name" value="Ribokinase-like"/>
    <property type="match status" value="1"/>
</dbReference>